<organism>
    <name type="scientific">Sphaenorhynchus lacteus</name>
    <name type="common">Orinoco lime treefrog</name>
    <name type="synonym">Hyla lactea</name>
    <dbReference type="NCBI Taxonomy" id="279984"/>
    <lineage>
        <taxon>Eukaryota</taxon>
        <taxon>Metazoa</taxon>
        <taxon>Chordata</taxon>
        <taxon>Craniata</taxon>
        <taxon>Vertebrata</taxon>
        <taxon>Euteleostomi</taxon>
        <taxon>Amphibia</taxon>
        <taxon>Batrachia</taxon>
        <taxon>Anura</taxon>
        <taxon>Neobatrachia</taxon>
        <taxon>Hyloidea</taxon>
        <taxon>Hylidae</taxon>
        <taxon>Hylinae</taxon>
        <taxon>Dendropsophini</taxon>
        <taxon>Sphaenorhynchus</taxon>
    </lineage>
</organism>
<evidence type="ECO:0000255" key="1"/>
<evidence type="ECO:0000256" key="2">
    <source>
        <dbReference type="SAM" id="MobiDB-lite"/>
    </source>
</evidence>
<evidence type="ECO:0000269" key="3">
    <source>
    </source>
</evidence>
<evidence type="ECO:0000269" key="4">
    <source>
    </source>
</evidence>
<evidence type="ECO:0000269" key="5">
    <source>
    </source>
</evidence>
<evidence type="ECO:0000269" key="6">
    <source>
    </source>
</evidence>
<evidence type="ECO:0000269" key="7">
    <source>
    </source>
</evidence>
<evidence type="ECO:0000269" key="8">
    <source>
    </source>
</evidence>
<evidence type="ECO:0000303" key="9">
    <source>
    </source>
</evidence>
<evidence type="ECO:0000303" key="10">
    <source>
    </source>
</evidence>
<evidence type="ECO:0000303" key="11">
    <source>
    </source>
</evidence>
<evidence type="ECO:0000305" key="12"/>
<evidence type="ECO:0000305" key="13">
    <source>
    </source>
</evidence>
<evidence type="ECO:0000305" key="14">
    <source>
    </source>
</evidence>
<protein>
    <recommendedName>
        <fullName evidence="9 10">Frenatin 2.3S</fullName>
        <shortName evidence="11">F2.3S</shortName>
    </recommendedName>
    <component>
        <recommendedName>
            <fullName evidence="9">Frenatin 2.1S</fullName>
            <shortName evidence="12">F2.1S</shortName>
        </recommendedName>
    </component>
</protein>
<feature type="signal peptide" evidence="1">
    <location>
        <begin position="1"/>
        <end position="22"/>
    </location>
</feature>
<feature type="propeptide" id="PRO_0000450233" evidence="13">
    <location>
        <begin position="23"/>
        <end position="54"/>
    </location>
</feature>
<feature type="peptide" id="PRO_0000450234" description="Frenatin 2.3S" evidence="14">
    <location>
        <begin position="55"/>
        <end position="71"/>
    </location>
</feature>
<feature type="peptide" id="PRO_5003945333" description="Frenatin 2.1S" evidence="3">
    <location>
        <begin position="55"/>
        <end position="70"/>
    </location>
</feature>
<feature type="region of interest" description="Disordered" evidence="2">
    <location>
        <begin position="21"/>
        <end position="56"/>
    </location>
</feature>
<feature type="compositionally biased region" description="Acidic residues" evidence="2">
    <location>
        <begin position="28"/>
        <end position="43"/>
    </location>
</feature>
<feature type="compositionally biased region" description="Basic and acidic residues" evidence="2">
    <location>
        <begin position="44"/>
        <end position="55"/>
    </location>
</feature>
<feature type="modified residue" description="Glycine amide; in Frenatin 2.1S" evidence="3">
    <location>
        <position position="70"/>
    </location>
</feature>
<reference key="1">
    <citation type="journal article" date="2016" name="J. Antibiot.">
        <title>Frog skin cultures secrete anti-yellow fever compounds.</title>
        <authorList>
            <person name="Munoz-Camargo C."/>
            <person name="Mendez M.C."/>
            <person name="Salazar V."/>
            <person name="Moscoso J."/>
            <person name="Narvaez D."/>
            <person name="Torres M.M."/>
            <person name="Florez F.K."/>
            <person name="Groot H."/>
            <person name="Mitrani E."/>
        </authorList>
    </citation>
    <scope>NUCLEOTIDE SEQUENCE [MRNA]</scope>
    <scope>FUNCTION AS ANTIVIRAL PEPTIDE</scope>
    <scope>SYNTHESIS OF 55-71</scope>
    <source>
        <tissue>Skin</tissue>
    </source>
</reference>
<reference key="2">
    <citation type="journal article" date="2014" name="Peptides">
        <title>A family of antimicrobial and immunomodulatory peptides related to the frenatins from skin secretions of the Orinoco lime frog Sphaenorhynchus lacteus (Hylidae).</title>
        <authorList>
            <person name="Conlon J.M."/>
            <person name="Mechkarska M."/>
            <person name="Radosavljevic G."/>
            <person name="Attoub S."/>
            <person name="King J.D."/>
            <person name="Lukic M.L."/>
            <person name="McClean S."/>
        </authorList>
    </citation>
    <scope>PROTEIN SEQUENCE OF 55-70</scope>
    <scope>FUNCTION</scope>
    <scope>MASS SPECTROMETRY</scope>
    <scope>SUBCELLULAR LOCATION</scope>
    <scope>AMIDATION AT GLY-70</scope>
    <source>
        <tissue>Skin secretion</tissue>
    </source>
</reference>
<reference key="3">
    <citation type="journal article" date="2015" name="Peptides">
        <title>In vivo administration of the frog skin peptide frenatin 2.1S induces immunostimulatory phenotypes of mouse mononuclear cells.</title>
        <authorList>
            <person name="Pantic J.M."/>
            <person name="Radosavljevic G.D."/>
            <person name="Jovanovic I.P."/>
            <person name="Arsenijevic N.N."/>
            <person name="Conlon J.M."/>
            <person name="Lukic M.L."/>
        </authorList>
    </citation>
    <scope>FUNCTION</scope>
    <scope>BIOASSAY</scope>
</reference>
<reference key="4">
    <citation type="journal article" date="2017" name="Peptides">
        <title>The frog skin host-defense peptide frenatin 2.1S enhances recruitment, activation and tumoricidal capacity of NK cells.</title>
        <authorList>
            <person name="Pantic J.M."/>
            <person name="Jovanovic I.P."/>
            <person name="Radosavljevic G.D."/>
            <person name="Gajovic N.M."/>
            <person name="Arsenijevic N.N."/>
            <person name="Conlon J.M."/>
            <person name="Lukic M.L."/>
        </authorList>
    </citation>
    <scope>FUNCTION</scope>
    <scope>SYNTHESIS OF 55-70</scope>
    <scope>PHARMACEUTICAL</scope>
</reference>
<reference key="5">
    <citation type="journal article" date="2018" name="Int. J. Mol. Sci.">
        <title>Unveiling the multifaceted mechanisms of antibacterial activity of buforin II and frenatin 2.3S peptides from skin micro-organs of the Orinoco lime treefrog (Sphaenorhynchus lacteus).</title>
        <authorList>
            <person name="Munoz-Camargo C."/>
            <person name="Salazar V.A."/>
            <person name="Barrero-Guevara L."/>
            <person name="Camargo S."/>
            <person name="Mosquera A."/>
            <person name="Groot H."/>
            <person name="Boix E."/>
        </authorList>
    </citation>
    <scope>FUNCTION</scope>
    <source>
        <tissue>Skin</tissue>
    </source>
</reference>
<reference key="6">
    <citation type="journal article" date="2019" name="Biochimie">
        <title>Insulinotropic activity of the host-defense peptide frenatin 2D: conformational, structure-function and mechanistic studies.</title>
        <authorList>
            <person name="Musale V."/>
            <person name="Guilhaudis L."/>
            <person name="Abdel-Wahab Y.H.A."/>
            <person name="Flatt P.R."/>
            <person name="Conlon J.M."/>
        </authorList>
    </citation>
    <scope>FUNCTION AS INSULINOTROPIC PEPTIDE</scope>
</reference>
<proteinExistence type="evidence at protein level"/>
<name>FRE21_SPHLA</name>
<dbReference type="EMBL" id="JX489597">
    <property type="protein sequence ID" value="AGB51284.1"/>
    <property type="molecule type" value="Genomic_RNA"/>
</dbReference>
<dbReference type="GO" id="GO:0005576">
    <property type="term" value="C:extracellular region"/>
    <property type="evidence" value="ECO:0007669"/>
    <property type="project" value="UniProtKB-SubCell"/>
</dbReference>
<dbReference type="GO" id="GO:0003677">
    <property type="term" value="F:DNA binding"/>
    <property type="evidence" value="ECO:0007669"/>
    <property type="project" value="UniProtKB-KW"/>
</dbReference>
<dbReference type="GO" id="GO:0042742">
    <property type="term" value="P:defense response to bacterium"/>
    <property type="evidence" value="ECO:0007669"/>
    <property type="project" value="UniProtKB-KW"/>
</dbReference>
<dbReference type="GO" id="GO:0045087">
    <property type="term" value="P:innate immune response"/>
    <property type="evidence" value="ECO:0007669"/>
    <property type="project" value="UniProtKB-KW"/>
</dbReference>
<dbReference type="GO" id="GO:0050688">
    <property type="term" value="P:regulation of defense response to virus"/>
    <property type="evidence" value="ECO:0007669"/>
    <property type="project" value="UniProtKB-KW"/>
</dbReference>
<dbReference type="InterPro" id="IPR004275">
    <property type="entry name" value="Frog_antimicrobial_propeptide"/>
</dbReference>
<dbReference type="Pfam" id="PF03032">
    <property type="entry name" value="FSAP_sig_propep"/>
    <property type="match status" value="1"/>
</dbReference>
<accession>L0L3V3</accession>
<comment type="function">
    <molecule>Frenatin 2.1S</molecule>
    <text evidence="3 4 5 6 8">Antimicrobial peptide with potent activity against Gram-negative bacteria (PubMed:24704757). Shows immunostimulatory actions both in vitro and in vivo (PubMed:24704757, PubMed:25861850, PubMed:28526557). In vitro, is cytotoxic to non-small cell lung adenocarcinoma A549 cells (PubMed:24704757). Also, stimulates production of pro-inflammatory cytokines by mouse peritoneal macrophages and down-regulates production of the anti-inflammatory cytokine IL-10 by lipopolysaccharide (LPS)-stimulated cells (PubMed:24704757). In vivo, intraperitoneal injection in mice enhances the activation state and homing capacity of Th1 type lymphocytes and promotes the recruitment, activation and tumoricidal capacities of peritoneal NK cells (PubMed:25861850, PubMed:28526557). Has a very weak activity in stimulation of insulin release and a weak hemolytic activity (PubMed:27049440, PubMed:30244134).</text>
</comment>
<comment type="function">
    <molecule>Frenatin 2.3S</molecule>
    <text evidence="3 5 7 8">Antimicrobial peptide with potent activity against some Gram-positive and Gram-negative bacteria (PubMed:30044391). Has a multifunctional mode of action (PubMed:30044391). It displays depolarization and bacterial cell leakage, and can also internalize into bacterial cells and alter specific gene expression involved in bacterial resistance mechanisms (PubMed:30044391). Does not agglutinate bacteria and lipid vesicles, even a high concentrations (PubMed:30044391). Also displays moderate cellular protection against yellow fever virus (YFV)-infected Vero cells without causing significant cytotoxicity (PubMed:27049440). Shows a weak hemolytic activity, and is not cytotoxic to monocytes (PubMed:30044391). Frenatin 2.3S (version without Gly-71) shows no or very weak antibacterial activity, shows no or very weak cytotoxicity to lung adenocarcinoma A549 cells and shows very weak hemolysis (PubMed:24704757). It only stimulates production of pro-inflammatory cytokines IL-23 (but not IL-1beta and TNF-alpha) by mouse peritoneal macrophages and has no effect on the production of the anti-inflammatory cytokine IL-10 (PubMed:24704757). Frenatin 2.3S (version without Gly-71) very weakly stimulates insulin release (PubMed:30244134).</text>
</comment>
<comment type="subcellular location">
    <subcellularLocation>
        <location evidence="3">Secreted</location>
    </subcellularLocation>
</comment>
<comment type="tissue specificity">
    <text evidence="13">Expressed by the skin glands.</text>
</comment>
<comment type="PTM">
    <text evidence="3">Frenatin 2.3S is not amidated.</text>
</comment>
<comment type="mass spectrometry" mass="1518.0" method="MALDI" evidence="3">
    <text>Frenatin 2.1S, amidated.</text>
</comment>
<comment type="mass spectrometry" mass="1518.9" method="MALDI" evidence="3">
    <text>Frenatin 2.3S, without Gly-71, non-amidated.</text>
</comment>
<comment type="pharmaceutical">
    <molecule>Frenatin 2.1S</molecule>
    <text evidence="6">May be regarded as a candidate for antitumor immunotherapy, since an injection of this peptide led to a marked increase in the number and tumoricidal capacity of activated peritoneal natural killer (NK) cells in the peritoneal cavity.</text>
</comment>
<comment type="similarity">
    <text evidence="12">Belongs to the frog skin active peptide (FSAP) family. Frenatin subfamily.</text>
</comment>
<comment type="caution">
    <text evidence="13 14">A paper describes Frenatin 2.3S as a non-amidated peptide of 17 amino acids (PubMed:27049440). In contrast, another report describes it as a non-amidated peptide of 16 amino acids (PubMed:24704757). Since the absence of a C-terminal Gly is generally explained by the activity of Gly as an amide donor, it is possible that Frenatin 2.3S described by PubMed:24704757 comes from another gene, and should be presented in another entry.</text>
</comment>
<sequence length="71" mass="7908">MAFLKKSLFLVLFLGLVSLSMGEREKREEEEEEEEENKEEEANEEGKGESEEKRGLVGTLLGHIGKAILGG</sequence>
<keyword id="KW-0027">Amidation</keyword>
<keyword id="KW-0878">Amphibian defense peptide</keyword>
<keyword id="KW-0044">Antibiotic</keyword>
<keyword id="KW-0929">Antimicrobial</keyword>
<keyword id="KW-0930">Antiviral protein</keyword>
<keyword id="KW-0165">Cleavage on pair of basic residues</keyword>
<keyword id="KW-0903">Direct protein sequencing</keyword>
<keyword id="KW-0238">DNA-binding</keyword>
<keyword id="KW-0391">Immunity</keyword>
<keyword id="KW-0399">Innate immunity</keyword>
<keyword id="KW-0582">Pharmaceutical</keyword>
<keyword id="KW-0964">Secreted</keyword>
<keyword id="KW-0732">Signal</keyword>